<comment type="function">
    <text evidence="1">ATP-dependent specificity component of the Clp protease. It directs the protease to specific substrates. Can perform chaperone functions in the absence of ClpP.</text>
</comment>
<comment type="subunit">
    <text evidence="1">Component of the ClpX-ClpP complex. Forms a hexameric ring that, in the presence of ATP, binds to fourteen ClpP subunits assembled into a disk-like structure with a central cavity, resembling the structure of eukaryotic proteasomes.</text>
</comment>
<comment type="similarity">
    <text evidence="1">Belongs to the ClpX chaperone family.</text>
</comment>
<name>CLPX_PARL1</name>
<protein>
    <recommendedName>
        <fullName evidence="1">ATP-dependent Clp protease ATP-binding subunit ClpX</fullName>
    </recommendedName>
</protein>
<accession>A7HY53</accession>
<keyword id="KW-0067">ATP-binding</keyword>
<keyword id="KW-0143">Chaperone</keyword>
<keyword id="KW-0479">Metal-binding</keyword>
<keyword id="KW-0547">Nucleotide-binding</keyword>
<keyword id="KW-1185">Reference proteome</keyword>
<keyword id="KW-0862">Zinc</keyword>
<sequence length="421" mass="46099">MSKVSGGDSKNTLYCSFCGKSQHEVRKLIAGPTVFICDECVELCMDIIREENKSSLVKSRDGVPSPQEICGVLDDYVIGQQHAKRVLSVAVHNHYKRLNHAAKNNDVELAKSNILLIGPTGCGKTLLAQTLARILDVPFTMADATTLTEAGYVGEDVENIILKLLQSADYNVERAQRGIVYIDEVDKISRKSDNPSITRDVSGEGVQQALLKIMEGTVASVPPQGGRKHPQQEFLQVDTTNILFICGGAFAGLEKIIGQRGKGAGIGFGAKVQSVEDRRTGDILKDLEPEDLLKFGLIPEFVGRMPVLATLEDLDEEALLTILTQPKNALVKQYERLFEMENVRLTFSEEALRAVSRKAIERKTGARGLRSILESILLDTMFELPTLEGVEEVVISAEVVEGKARPLYIYAERQGDVGTGA</sequence>
<gene>
    <name evidence="1" type="primary">clpX</name>
    <name type="ordered locus">Plav_3231</name>
</gene>
<dbReference type="EMBL" id="CP000774">
    <property type="protein sequence ID" value="ABS64836.1"/>
    <property type="molecule type" value="Genomic_DNA"/>
</dbReference>
<dbReference type="RefSeq" id="WP_012112164.1">
    <property type="nucleotide sequence ID" value="NC_009719.1"/>
</dbReference>
<dbReference type="SMR" id="A7HY53"/>
<dbReference type="STRING" id="402881.Plav_3231"/>
<dbReference type="KEGG" id="pla:Plav_3231"/>
<dbReference type="eggNOG" id="COG1219">
    <property type="taxonomic scope" value="Bacteria"/>
</dbReference>
<dbReference type="HOGENOM" id="CLU_014218_8_2_5"/>
<dbReference type="OrthoDB" id="9804062at2"/>
<dbReference type="Proteomes" id="UP000006377">
    <property type="component" value="Chromosome"/>
</dbReference>
<dbReference type="GO" id="GO:0009376">
    <property type="term" value="C:HslUV protease complex"/>
    <property type="evidence" value="ECO:0007669"/>
    <property type="project" value="TreeGrafter"/>
</dbReference>
<dbReference type="GO" id="GO:0005524">
    <property type="term" value="F:ATP binding"/>
    <property type="evidence" value="ECO:0007669"/>
    <property type="project" value="UniProtKB-UniRule"/>
</dbReference>
<dbReference type="GO" id="GO:0016887">
    <property type="term" value="F:ATP hydrolysis activity"/>
    <property type="evidence" value="ECO:0007669"/>
    <property type="project" value="InterPro"/>
</dbReference>
<dbReference type="GO" id="GO:0140662">
    <property type="term" value="F:ATP-dependent protein folding chaperone"/>
    <property type="evidence" value="ECO:0007669"/>
    <property type="project" value="InterPro"/>
</dbReference>
<dbReference type="GO" id="GO:0046983">
    <property type="term" value="F:protein dimerization activity"/>
    <property type="evidence" value="ECO:0007669"/>
    <property type="project" value="InterPro"/>
</dbReference>
<dbReference type="GO" id="GO:0051082">
    <property type="term" value="F:unfolded protein binding"/>
    <property type="evidence" value="ECO:0007669"/>
    <property type="project" value="UniProtKB-UniRule"/>
</dbReference>
<dbReference type="GO" id="GO:0008270">
    <property type="term" value="F:zinc ion binding"/>
    <property type="evidence" value="ECO:0007669"/>
    <property type="project" value="InterPro"/>
</dbReference>
<dbReference type="GO" id="GO:0051301">
    <property type="term" value="P:cell division"/>
    <property type="evidence" value="ECO:0007669"/>
    <property type="project" value="TreeGrafter"/>
</dbReference>
<dbReference type="GO" id="GO:0051603">
    <property type="term" value="P:proteolysis involved in protein catabolic process"/>
    <property type="evidence" value="ECO:0007669"/>
    <property type="project" value="TreeGrafter"/>
</dbReference>
<dbReference type="CDD" id="cd19497">
    <property type="entry name" value="RecA-like_ClpX"/>
    <property type="match status" value="1"/>
</dbReference>
<dbReference type="FunFam" id="1.10.8.60:FF:000002">
    <property type="entry name" value="ATP-dependent Clp protease ATP-binding subunit ClpX"/>
    <property type="match status" value="1"/>
</dbReference>
<dbReference type="FunFam" id="3.40.50.300:FF:000005">
    <property type="entry name" value="ATP-dependent Clp protease ATP-binding subunit ClpX"/>
    <property type="match status" value="1"/>
</dbReference>
<dbReference type="Gene3D" id="1.10.8.60">
    <property type="match status" value="1"/>
</dbReference>
<dbReference type="Gene3D" id="6.20.220.10">
    <property type="entry name" value="ClpX chaperone, C4-type zinc finger domain"/>
    <property type="match status" value="1"/>
</dbReference>
<dbReference type="Gene3D" id="3.40.50.300">
    <property type="entry name" value="P-loop containing nucleotide triphosphate hydrolases"/>
    <property type="match status" value="1"/>
</dbReference>
<dbReference type="HAMAP" id="MF_00175">
    <property type="entry name" value="ClpX"/>
    <property type="match status" value="1"/>
</dbReference>
<dbReference type="InterPro" id="IPR003593">
    <property type="entry name" value="AAA+_ATPase"/>
</dbReference>
<dbReference type="InterPro" id="IPR050052">
    <property type="entry name" value="ATP-dep_Clp_protease_ClpX"/>
</dbReference>
<dbReference type="InterPro" id="IPR003959">
    <property type="entry name" value="ATPase_AAA_core"/>
</dbReference>
<dbReference type="InterPro" id="IPR019489">
    <property type="entry name" value="Clp_ATPase_C"/>
</dbReference>
<dbReference type="InterPro" id="IPR004487">
    <property type="entry name" value="Clp_protease_ATP-bd_su_ClpX"/>
</dbReference>
<dbReference type="InterPro" id="IPR046425">
    <property type="entry name" value="ClpX_bact"/>
</dbReference>
<dbReference type="InterPro" id="IPR027417">
    <property type="entry name" value="P-loop_NTPase"/>
</dbReference>
<dbReference type="InterPro" id="IPR010603">
    <property type="entry name" value="Znf_CppX_C4"/>
</dbReference>
<dbReference type="InterPro" id="IPR038366">
    <property type="entry name" value="Znf_CppX_C4_sf"/>
</dbReference>
<dbReference type="NCBIfam" id="TIGR00382">
    <property type="entry name" value="clpX"/>
    <property type="match status" value="1"/>
</dbReference>
<dbReference type="NCBIfam" id="NF003745">
    <property type="entry name" value="PRK05342.1"/>
    <property type="match status" value="1"/>
</dbReference>
<dbReference type="PANTHER" id="PTHR48102:SF7">
    <property type="entry name" value="ATP-DEPENDENT CLP PROTEASE ATP-BINDING SUBUNIT CLPX-LIKE, MITOCHONDRIAL"/>
    <property type="match status" value="1"/>
</dbReference>
<dbReference type="PANTHER" id="PTHR48102">
    <property type="entry name" value="ATP-DEPENDENT CLP PROTEASE ATP-BINDING SUBUNIT CLPX-LIKE, MITOCHONDRIAL-RELATED"/>
    <property type="match status" value="1"/>
</dbReference>
<dbReference type="Pfam" id="PF07724">
    <property type="entry name" value="AAA_2"/>
    <property type="match status" value="1"/>
</dbReference>
<dbReference type="Pfam" id="PF10431">
    <property type="entry name" value="ClpB_D2-small"/>
    <property type="match status" value="1"/>
</dbReference>
<dbReference type="Pfam" id="PF06689">
    <property type="entry name" value="zf-C4_ClpX"/>
    <property type="match status" value="1"/>
</dbReference>
<dbReference type="SMART" id="SM00382">
    <property type="entry name" value="AAA"/>
    <property type="match status" value="1"/>
</dbReference>
<dbReference type="SMART" id="SM01086">
    <property type="entry name" value="ClpB_D2-small"/>
    <property type="match status" value="1"/>
</dbReference>
<dbReference type="SMART" id="SM00994">
    <property type="entry name" value="zf-C4_ClpX"/>
    <property type="match status" value="1"/>
</dbReference>
<dbReference type="SUPFAM" id="SSF57716">
    <property type="entry name" value="Glucocorticoid receptor-like (DNA-binding domain)"/>
    <property type="match status" value="1"/>
</dbReference>
<dbReference type="SUPFAM" id="SSF52540">
    <property type="entry name" value="P-loop containing nucleoside triphosphate hydrolases"/>
    <property type="match status" value="1"/>
</dbReference>
<dbReference type="PROSITE" id="PS51902">
    <property type="entry name" value="CLPX_ZB"/>
    <property type="match status" value="1"/>
</dbReference>
<feature type="chain" id="PRO_1000071624" description="ATP-dependent Clp protease ATP-binding subunit ClpX">
    <location>
        <begin position="1"/>
        <end position="421"/>
    </location>
</feature>
<feature type="domain" description="ClpX-type ZB" evidence="2">
    <location>
        <begin position="3"/>
        <end position="56"/>
    </location>
</feature>
<feature type="binding site" evidence="2">
    <location>
        <position position="15"/>
    </location>
    <ligand>
        <name>Zn(2+)</name>
        <dbReference type="ChEBI" id="CHEBI:29105"/>
    </ligand>
</feature>
<feature type="binding site" evidence="2">
    <location>
        <position position="18"/>
    </location>
    <ligand>
        <name>Zn(2+)</name>
        <dbReference type="ChEBI" id="CHEBI:29105"/>
    </ligand>
</feature>
<feature type="binding site" evidence="2">
    <location>
        <position position="37"/>
    </location>
    <ligand>
        <name>Zn(2+)</name>
        <dbReference type="ChEBI" id="CHEBI:29105"/>
    </ligand>
</feature>
<feature type="binding site" evidence="2">
    <location>
        <position position="40"/>
    </location>
    <ligand>
        <name>Zn(2+)</name>
        <dbReference type="ChEBI" id="CHEBI:29105"/>
    </ligand>
</feature>
<feature type="binding site" evidence="1">
    <location>
        <begin position="119"/>
        <end position="126"/>
    </location>
    <ligand>
        <name>ATP</name>
        <dbReference type="ChEBI" id="CHEBI:30616"/>
    </ligand>
</feature>
<reference key="1">
    <citation type="journal article" date="2011" name="Stand. Genomic Sci.">
        <title>Complete genome sequence of Parvibaculum lavamentivorans type strain (DS-1(T)).</title>
        <authorList>
            <person name="Schleheck D."/>
            <person name="Weiss M."/>
            <person name="Pitluck S."/>
            <person name="Bruce D."/>
            <person name="Land M.L."/>
            <person name="Han S."/>
            <person name="Saunders E."/>
            <person name="Tapia R."/>
            <person name="Detter C."/>
            <person name="Brettin T."/>
            <person name="Han J."/>
            <person name="Woyke T."/>
            <person name="Goodwin L."/>
            <person name="Pennacchio L."/>
            <person name="Nolan M."/>
            <person name="Cook A.M."/>
            <person name="Kjelleberg S."/>
            <person name="Thomas T."/>
        </authorList>
    </citation>
    <scope>NUCLEOTIDE SEQUENCE [LARGE SCALE GENOMIC DNA]</scope>
    <source>
        <strain>DS-1 / DSM 13023 / NCIMB 13966</strain>
    </source>
</reference>
<proteinExistence type="inferred from homology"/>
<evidence type="ECO:0000255" key="1">
    <source>
        <dbReference type="HAMAP-Rule" id="MF_00175"/>
    </source>
</evidence>
<evidence type="ECO:0000255" key="2">
    <source>
        <dbReference type="PROSITE-ProRule" id="PRU01250"/>
    </source>
</evidence>
<organism>
    <name type="scientific">Parvibaculum lavamentivorans (strain DS-1 / DSM 13023 / NCIMB 13966)</name>
    <dbReference type="NCBI Taxonomy" id="402881"/>
    <lineage>
        <taxon>Bacteria</taxon>
        <taxon>Pseudomonadati</taxon>
        <taxon>Pseudomonadota</taxon>
        <taxon>Alphaproteobacteria</taxon>
        <taxon>Hyphomicrobiales</taxon>
        <taxon>Parvibaculaceae</taxon>
        <taxon>Parvibaculum</taxon>
    </lineage>
</organism>